<evidence type="ECO:0000255" key="1">
    <source>
        <dbReference type="HAMAP-Rule" id="MF_00160"/>
    </source>
</evidence>
<comment type="function">
    <text evidence="1">Catalyzes the reversible conversion of 3-phosphohydroxypyruvate to phosphoserine and of 3-hydroxy-2-oxo-4-phosphonooxybutanoate to phosphohydroxythreonine.</text>
</comment>
<comment type="catalytic activity">
    <reaction evidence="1">
        <text>O-phospho-L-serine + 2-oxoglutarate = 3-phosphooxypyruvate + L-glutamate</text>
        <dbReference type="Rhea" id="RHEA:14329"/>
        <dbReference type="ChEBI" id="CHEBI:16810"/>
        <dbReference type="ChEBI" id="CHEBI:18110"/>
        <dbReference type="ChEBI" id="CHEBI:29985"/>
        <dbReference type="ChEBI" id="CHEBI:57524"/>
        <dbReference type="EC" id="2.6.1.52"/>
    </reaction>
</comment>
<comment type="catalytic activity">
    <reaction evidence="1">
        <text>4-(phosphooxy)-L-threonine + 2-oxoglutarate = (R)-3-hydroxy-2-oxo-4-phosphooxybutanoate + L-glutamate</text>
        <dbReference type="Rhea" id="RHEA:16573"/>
        <dbReference type="ChEBI" id="CHEBI:16810"/>
        <dbReference type="ChEBI" id="CHEBI:29985"/>
        <dbReference type="ChEBI" id="CHEBI:58452"/>
        <dbReference type="ChEBI" id="CHEBI:58538"/>
        <dbReference type="EC" id="2.6.1.52"/>
    </reaction>
</comment>
<comment type="cofactor">
    <cofactor evidence="1">
        <name>pyridoxal 5'-phosphate</name>
        <dbReference type="ChEBI" id="CHEBI:597326"/>
    </cofactor>
    <text evidence="1">Binds 1 pyridoxal phosphate per subunit.</text>
</comment>
<comment type="pathway">
    <text evidence="1">Amino-acid biosynthesis; L-serine biosynthesis; L-serine from 3-phospho-D-glycerate: step 2/3.</text>
</comment>
<comment type="subunit">
    <text evidence="1">Homodimer.</text>
</comment>
<comment type="subcellular location">
    <subcellularLocation>
        <location evidence="1">Cytoplasm</location>
    </subcellularLocation>
</comment>
<comment type="similarity">
    <text evidence="1">Belongs to the class-V pyridoxal-phosphate-dependent aminotransferase family. SerC subfamily.</text>
</comment>
<feature type="chain" id="PRO_1000123467" description="Phosphoserine aminotransferase">
    <location>
        <begin position="1"/>
        <end position="361"/>
    </location>
</feature>
<feature type="binding site" evidence="1">
    <location>
        <position position="43"/>
    </location>
    <ligand>
        <name>L-glutamate</name>
        <dbReference type="ChEBI" id="CHEBI:29985"/>
    </ligand>
</feature>
<feature type="binding site" evidence="1">
    <location>
        <begin position="77"/>
        <end position="78"/>
    </location>
    <ligand>
        <name>pyridoxal 5'-phosphate</name>
        <dbReference type="ChEBI" id="CHEBI:597326"/>
    </ligand>
</feature>
<feature type="binding site" evidence="1">
    <location>
        <position position="103"/>
    </location>
    <ligand>
        <name>pyridoxal 5'-phosphate</name>
        <dbReference type="ChEBI" id="CHEBI:597326"/>
    </ligand>
</feature>
<feature type="binding site" evidence="1">
    <location>
        <position position="153"/>
    </location>
    <ligand>
        <name>pyridoxal 5'-phosphate</name>
        <dbReference type="ChEBI" id="CHEBI:597326"/>
    </ligand>
</feature>
<feature type="binding site" evidence="1">
    <location>
        <position position="173"/>
    </location>
    <ligand>
        <name>pyridoxal 5'-phosphate</name>
        <dbReference type="ChEBI" id="CHEBI:597326"/>
    </ligand>
</feature>
<feature type="binding site" evidence="1">
    <location>
        <position position="196"/>
    </location>
    <ligand>
        <name>pyridoxal 5'-phosphate</name>
        <dbReference type="ChEBI" id="CHEBI:597326"/>
    </ligand>
</feature>
<feature type="binding site" evidence="1">
    <location>
        <begin position="238"/>
        <end position="239"/>
    </location>
    <ligand>
        <name>pyridoxal 5'-phosphate</name>
        <dbReference type="ChEBI" id="CHEBI:597326"/>
    </ligand>
</feature>
<feature type="modified residue" description="N6-(pyridoxal phosphate)lysine" evidence="1">
    <location>
        <position position="197"/>
    </location>
</feature>
<gene>
    <name evidence="1" type="primary">serC</name>
    <name type="ordered locus">BAA_3356</name>
</gene>
<name>SERC_BACAA</name>
<keyword id="KW-0028">Amino-acid biosynthesis</keyword>
<keyword id="KW-0032">Aminotransferase</keyword>
<keyword id="KW-0963">Cytoplasm</keyword>
<keyword id="KW-0663">Pyridoxal phosphate</keyword>
<keyword id="KW-0718">Serine biosynthesis</keyword>
<keyword id="KW-0808">Transferase</keyword>
<organism>
    <name type="scientific">Bacillus anthracis (strain A0248)</name>
    <dbReference type="NCBI Taxonomy" id="592021"/>
    <lineage>
        <taxon>Bacteria</taxon>
        <taxon>Bacillati</taxon>
        <taxon>Bacillota</taxon>
        <taxon>Bacilli</taxon>
        <taxon>Bacillales</taxon>
        <taxon>Bacillaceae</taxon>
        <taxon>Bacillus</taxon>
        <taxon>Bacillus cereus group</taxon>
    </lineage>
</organism>
<reference key="1">
    <citation type="submission" date="2009-04" db="EMBL/GenBank/DDBJ databases">
        <title>Genome sequence of Bacillus anthracis A0248.</title>
        <authorList>
            <person name="Dodson R.J."/>
            <person name="Munk A.C."/>
            <person name="Bruce D."/>
            <person name="Detter C."/>
            <person name="Tapia R."/>
            <person name="Sutton G."/>
            <person name="Sims D."/>
            <person name="Brettin T."/>
        </authorList>
    </citation>
    <scope>NUCLEOTIDE SEQUENCE [LARGE SCALE GENOMIC DNA]</scope>
    <source>
        <strain>A0248</strain>
    </source>
</reference>
<sequence length="361" mass="40479">MMERVYNFSAGPSILPLPVLEKVQKELVNYNGTGMSIMEMSHRSSYFQSIIDEAGSLLRELMNIPDEYEVLFLQGGASLQFSMIPLNLMNTYKKAGYVLTGSWSKKALQEAEKVGEVQVIASSENEKFTTIPKLDGLLGDEKLDYVHITTNNTIEGTKYVDIPHVDKVPLVADMSPNILSERYDVSKFGLIYAGAQKNLGPAGLTIAIIKRDLIGGADRYCPTMLNYETYSKNNSLYNTLPSFSIYVTKLVLEWLKEQGGVSAIEEQNKMKSSLLYNFLDESKLLTSPVDPAYRSLMNIPFTTPSEELNNEFLQKAKERGLVTLKGHRSVGGMRASIYNAMPVQGVQQLVNYMKEFELENR</sequence>
<protein>
    <recommendedName>
        <fullName evidence="1">Phosphoserine aminotransferase</fullName>
        <ecNumber evidence="1">2.6.1.52</ecNumber>
    </recommendedName>
    <alternativeName>
        <fullName evidence="1">Phosphohydroxythreonine aminotransferase</fullName>
        <shortName evidence="1">PSAT</shortName>
    </alternativeName>
</protein>
<dbReference type="EC" id="2.6.1.52" evidence="1"/>
<dbReference type="EMBL" id="CP001598">
    <property type="protein sequence ID" value="ACQ48124.1"/>
    <property type="molecule type" value="Genomic_DNA"/>
</dbReference>
<dbReference type="SMR" id="C3P210"/>
<dbReference type="KEGG" id="bai:BAA_3356"/>
<dbReference type="HOGENOM" id="CLU_034866_0_2_9"/>
<dbReference type="UniPathway" id="UPA00135">
    <property type="reaction ID" value="UER00197"/>
</dbReference>
<dbReference type="GO" id="GO:0005737">
    <property type="term" value="C:cytoplasm"/>
    <property type="evidence" value="ECO:0007669"/>
    <property type="project" value="UniProtKB-SubCell"/>
</dbReference>
<dbReference type="GO" id="GO:0004648">
    <property type="term" value="F:O-phospho-L-serine:2-oxoglutarate aminotransferase activity"/>
    <property type="evidence" value="ECO:0007669"/>
    <property type="project" value="UniProtKB-UniRule"/>
</dbReference>
<dbReference type="GO" id="GO:0030170">
    <property type="term" value="F:pyridoxal phosphate binding"/>
    <property type="evidence" value="ECO:0007669"/>
    <property type="project" value="UniProtKB-UniRule"/>
</dbReference>
<dbReference type="GO" id="GO:0006564">
    <property type="term" value="P:L-serine biosynthetic process"/>
    <property type="evidence" value="ECO:0007669"/>
    <property type="project" value="UniProtKB-UniRule"/>
</dbReference>
<dbReference type="CDD" id="cd00611">
    <property type="entry name" value="PSAT_like"/>
    <property type="match status" value="1"/>
</dbReference>
<dbReference type="FunFam" id="3.40.640.10:FF:000010">
    <property type="entry name" value="Phosphoserine aminotransferase"/>
    <property type="match status" value="1"/>
</dbReference>
<dbReference type="FunFam" id="3.90.1150.10:FF:000006">
    <property type="entry name" value="Phosphoserine aminotransferase"/>
    <property type="match status" value="1"/>
</dbReference>
<dbReference type="Gene3D" id="3.90.1150.10">
    <property type="entry name" value="Aspartate Aminotransferase, domain 1"/>
    <property type="match status" value="1"/>
</dbReference>
<dbReference type="Gene3D" id="3.40.640.10">
    <property type="entry name" value="Type I PLP-dependent aspartate aminotransferase-like (Major domain)"/>
    <property type="match status" value="1"/>
</dbReference>
<dbReference type="HAMAP" id="MF_00160">
    <property type="entry name" value="SerC_aminotrans_5"/>
    <property type="match status" value="1"/>
</dbReference>
<dbReference type="InterPro" id="IPR000192">
    <property type="entry name" value="Aminotrans_V_dom"/>
</dbReference>
<dbReference type="InterPro" id="IPR020578">
    <property type="entry name" value="Aminotrans_V_PyrdxlP_BS"/>
</dbReference>
<dbReference type="InterPro" id="IPR022278">
    <property type="entry name" value="Pser_aminoTfrase"/>
</dbReference>
<dbReference type="InterPro" id="IPR015424">
    <property type="entry name" value="PyrdxlP-dep_Trfase"/>
</dbReference>
<dbReference type="InterPro" id="IPR015421">
    <property type="entry name" value="PyrdxlP-dep_Trfase_major"/>
</dbReference>
<dbReference type="InterPro" id="IPR015422">
    <property type="entry name" value="PyrdxlP-dep_Trfase_small"/>
</dbReference>
<dbReference type="NCBIfam" id="NF003764">
    <property type="entry name" value="PRK05355.1"/>
    <property type="match status" value="1"/>
</dbReference>
<dbReference type="NCBIfam" id="TIGR01364">
    <property type="entry name" value="serC_1"/>
    <property type="match status" value="1"/>
</dbReference>
<dbReference type="PANTHER" id="PTHR43247">
    <property type="entry name" value="PHOSPHOSERINE AMINOTRANSFERASE"/>
    <property type="match status" value="1"/>
</dbReference>
<dbReference type="PANTHER" id="PTHR43247:SF1">
    <property type="entry name" value="PHOSPHOSERINE AMINOTRANSFERASE"/>
    <property type="match status" value="1"/>
</dbReference>
<dbReference type="Pfam" id="PF00266">
    <property type="entry name" value="Aminotran_5"/>
    <property type="match status" value="1"/>
</dbReference>
<dbReference type="PIRSF" id="PIRSF000525">
    <property type="entry name" value="SerC"/>
    <property type="match status" value="1"/>
</dbReference>
<dbReference type="SUPFAM" id="SSF53383">
    <property type="entry name" value="PLP-dependent transferases"/>
    <property type="match status" value="1"/>
</dbReference>
<dbReference type="PROSITE" id="PS00595">
    <property type="entry name" value="AA_TRANSFER_CLASS_5"/>
    <property type="match status" value="1"/>
</dbReference>
<proteinExistence type="inferred from homology"/>
<accession>C3P210</accession>